<gene>
    <name evidence="1" type="primary">rpsP</name>
    <name type="ordered locus">VIBHAR_03480</name>
</gene>
<organism>
    <name type="scientific">Vibrio campbellii (strain ATCC BAA-1116)</name>
    <dbReference type="NCBI Taxonomy" id="2902295"/>
    <lineage>
        <taxon>Bacteria</taxon>
        <taxon>Pseudomonadati</taxon>
        <taxon>Pseudomonadota</taxon>
        <taxon>Gammaproteobacteria</taxon>
        <taxon>Vibrionales</taxon>
        <taxon>Vibrionaceae</taxon>
        <taxon>Vibrio</taxon>
    </lineage>
</organism>
<protein>
    <recommendedName>
        <fullName evidence="1">Small ribosomal subunit protein bS16</fullName>
    </recommendedName>
    <alternativeName>
        <fullName evidence="2">30S ribosomal protein S16</fullName>
    </alternativeName>
</protein>
<evidence type="ECO:0000255" key="1">
    <source>
        <dbReference type="HAMAP-Rule" id="MF_00385"/>
    </source>
</evidence>
<evidence type="ECO:0000305" key="2"/>
<proteinExistence type="inferred from homology"/>
<sequence>MVTIRLARHGAKKRPFYQIVVADSRNAATGRFIEKVGFFNPTAQGQEEGLRLDLDRVNHWVGQGASLSDRVAKLVKDAQKAA</sequence>
<accession>A7MYV1</accession>
<keyword id="KW-0687">Ribonucleoprotein</keyword>
<keyword id="KW-0689">Ribosomal protein</keyword>
<feature type="chain" id="PRO_1000049376" description="Small ribosomal subunit protein bS16">
    <location>
        <begin position="1"/>
        <end position="82"/>
    </location>
</feature>
<dbReference type="EMBL" id="CP000789">
    <property type="protein sequence ID" value="ABU72425.1"/>
    <property type="molecule type" value="Genomic_DNA"/>
</dbReference>
<dbReference type="RefSeq" id="WP_004410028.1">
    <property type="nucleotide sequence ID" value="NC_022269.1"/>
</dbReference>
<dbReference type="SMR" id="A7MYV1"/>
<dbReference type="GeneID" id="93901090"/>
<dbReference type="KEGG" id="vha:VIBHAR_03480"/>
<dbReference type="PATRIC" id="fig|338187.25.peg.2720"/>
<dbReference type="Proteomes" id="UP000008152">
    <property type="component" value="Chromosome I"/>
</dbReference>
<dbReference type="GO" id="GO:0005737">
    <property type="term" value="C:cytoplasm"/>
    <property type="evidence" value="ECO:0007669"/>
    <property type="project" value="UniProtKB-ARBA"/>
</dbReference>
<dbReference type="GO" id="GO:0015935">
    <property type="term" value="C:small ribosomal subunit"/>
    <property type="evidence" value="ECO:0007669"/>
    <property type="project" value="TreeGrafter"/>
</dbReference>
<dbReference type="GO" id="GO:0003735">
    <property type="term" value="F:structural constituent of ribosome"/>
    <property type="evidence" value="ECO:0007669"/>
    <property type="project" value="InterPro"/>
</dbReference>
<dbReference type="GO" id="GO:0006412">
    <property type="term" value="P:translation"/>
    <property type="evidence" value="ECO:0007669"/>
    <property type="project" value="UniProtKB-UniRule"/>
</dbReference>
<dbReference type="FunFam" id="3.30.1320.10:FF:000001">
    <property type="entry name" value="30S ribosomal protein S16"/>
    <property type="match status" value="1"/>
</dbReference>
<dbReference type="Gene3D" id="3.30.1320.10">
    <property type="match status" value="1"/>
</dbReference>
<dbReference type="HAMAP" id="MF_00385">
    <property type="entry name" value="Ribosomal_bS16"/>
    <property type="match status" value="1"/>
</dbReference>
<dbReference type="InterPro" id="IPR000307">
    <property type="entry name" value="Ribosomal_bS16"/>
</dbReference>
<dbReference type="InterPro" id="IPR020592">
    <property type="entry name" value="Ribosomal_bS16_CS"/>
</dbReference>
<dbReference type="InterPro" id="IPR023803">
    <property type="entry name" value="Ribosomal_bS16_dom_sf"/>
</dbReference>
<dbReference type="NCBIfam" id="TIGR00002">
    <property type="entry name" value="S16"/>
    <property type="match status" value="1"/>
</dbReference>
<dbReference type="PANTHER" id="PTHR12919">
    <property type="entry name" value="30S RIBOSOMAL PROTEIN S16"/>
    <property type="match status" value="1"/>
</dbReference>
<dbReference type="PANTHER" id="PTHR12919:SF20">
    <property type="entry name" value="SMALL RIBOSOMAL SUBUNIT PROTEIN BS16M"/>
    <property type="match status" value="1"/>
</dbReference>
<dbReference type="Pfam" id="PF00886">
    <property type="entry name" value="Ribosomal_S16"/>
    <property type="match status" value="1"/>
</dbReference>
<dbReference type="SUPFAM" id="SSF54565">
    <property type="entry name" value="Ribosomal protein S16"/>
    <property type="match status" value="1"/>
</dbReference>
<dbReference type="PROSITE" id="PS00732">
    <property type="entry name" value="RIBOSOMAL_S16"/>
    <property type="match status" value="1"/>
</dbReference>
<comment type="similarity">
    <text evidence="1">Belongs to the bacterial ribosomal protein bS16 family.</text>
</comment>
<name>RS16_VIBC1</name>
<reference key="1">
    <citation type="submission" date="2007-08" db="EMBL/GenBank/DDBJ databases">
        <authorList>
            <consortium name="The Vibrio harveyi Genome Sequencing Project"/>
            <person name="Bassler B."/>
            <person name="Clifton S.W."/>
            <person name="Fulton L."/>
            <person name="Delehaunty K."/>
            <person name="Fronick C."/>
            <person name="Harrison M."/>
            <person name="Markivic C."/>
            <person name="Fulton R."/>
            <person name="Tin-Wollam A.-M."/>
            <person name="Shah N."/>
            <person name="Pepin K."/>
            <person name="Nash W."/>
            <person name="Thiruvilangam P."/>
            <person name="Bhonagiri V."/>
            <person name="Waters C."/>
            <person name="Tu K.C."/>
            <person name="Irgon J."/>
            <person name="Wilson R.K."/>
        </authorList>
    </citation>
    <scope>NUCLEOTIDE SEQUENCE [LARGE SCALE GENOMIC DNA]</scope>
    <source>
        <strain>ATCC BAA-1116 / BB120</strain>
    </source>
</reference>